<accession>A4QJV9</accession>
<proteinExistence type="inferred from homology"/>
<name>PSBN_OLIPU</name>
<comment type="function">
    <text evidence="1">May play a role in photosystem I and II biogenesis.</text>
</comment>
<comment type="subcellular location">
    <subcellularLocation>
        <location evidence="1">Plastid</location>
        <location evidence="1">Chloroplast thylakoid membrane</location>
        <topology evidence="1">Single-pass membrane protein</topology>
    </subcellularLocation>
</comment>
<comment type="similarity">
    <text evidence="1">Belongs to the PsbN family.</text>
</comment>
<comment type="caution">
    <text evidence="1">Originally thought to be a component of PSII; based on experiments in Synechocystis, N.tabacum and barley, and its absence from PSII in T.elongatus and T.vulcanus, this is probably not true.</text>
</comment>
<geneLocation type="chloroplast"/>
<organism>
    <name type="scientific">Olimarabidopsis pumila</name>
    <name type="common">Dwarf rocket</name>
    <name type="synonym">Arabidopsis griffithiana</name>
    <dbReference type="NCBI Taxonomy" id="74718"/>
    <lineage>
        <taxon>Eukaryota</taxon>
        <taxon>Viridiplantae</taxon>
        <taxon>Streptophyta</taxon>
        <taxon>Embryophyta</taxon>
        <taxon>Tracheophyta</taxon>
        <taxon>Spermatophyta</taxon>
        <taxon>Magnoliopsida</taxon>
        <taxon>eudicotyledons</taxon>
        <taxon>Gunneridae</taxon>
        <taxon>Pentapetalae</taxon>
        <taxon>rosids</taxon>
        <taxon>malvids</taxon>
        <taxon>Brassicales</taxon>
        <taxon>Brassicaceae</taxon>
        <taxon>Alyssopsideae</taxon>
        <taxon>Olimarabidopsis</taxon>
    </lineage>
</organism>
<feature type="chain" id="PRO_0000362210" description="Protein PsbN">
    <location>
        <begin position="1"/>
        <end position="43"/>
    </location>
</feature>
<feature type="transmembrane region" description="Helical" evidence="1">
    <location>
        <begin position="7"/>
        <end position="27"/>
    </location>
</feature>
<keyword id="KW-0150">Chloroplast</keyword>
<keyword id="KW-0472">Membrane</keyword>
<keyword id="KW-0934">Plastid</keyword>
<keyword id="KW-0793">Thylakoid</keyword>
<keyword id="KW-0812">Transmembrane</keyword>
<keyword id="KW-1133">Transmembrane helix</keyword>
<reference key="1">
    <citation type="submission" date="2007-03" db="EMBL/GenBank/DDBJ databases">
        <title>Sequence analysis of Arabidopsis pumila JS2 chloroplast DNA.</title>
        <authorList>
            <person name="Hosouchi T."/>
            <person name="Tsuruoka H."/>
            <person name="Kotani H."/>
        </authorList>
    </citation>
    <scope>NUCLEOTIDE SEQUENCE [LARGE SCALE GENOMIC DNA]</scope>
</reference>
<sequence length="43" mass="4722">METATLVAIFISGLLVSFTGYALYTAFGQPSQQLRDPFEEHGD</sequence>
<protein>
    <recommendedName>
        <fullName evidence="1">Protein PsbN</fullName>
    </recommendedName>
</protein>
<gene>
    <name evidence="1" type="primary">psbN</name>
</gene>
<evidence type="ECO:0000255" key="1">
    <source>
        <dbReference type="HAMAP-Rule" id="MF_00293"/>
    </source>
</evidence>
<dbReference type="EMBL" id="AP009368">
    <property type="protein sequence ID" value="BAF49967.1"/>
    <property type="molecule type" value="Genomic_DNA"/>
</dbReference>
<dbReference type="RefSeq" id="YP_001123143.1">
    <property type="nucleotide sequence ID" value="NC_009267.1"/>
</dbReference>
<dbReference type="SMR" id="A4QJV9"/>
<dbReference type="GeneID" id="4962373"/>
<dbReference type="GO" id="GO:0009535">
    <property type="term" value="C:chloroplast thylakoid membrane"/>
    <property type="evidence" value="ECO:0007669"/>
    <property type="project" value="UniProtKB-SubCell"/>
</dbReference>
<dbReference type="GO" id="GO:0015979">
    <property type="term" value="P:photosynthesis"/>
    <property type="evidence" value="ECO:0007669"/>
    <property type="project" value="InterPro"/>
</dbReference>
<dbReference type="HAMAP" id="MF_00293">
    <property type="entry name" value="PSII_PsbN"/>
    <property type="match status" value="1"/>
</dbReference>
<dbReference type="InterPro" id="IPR003398">
    <property type="entry name" value="PSII_PsbN"/>
</dbReference>
<dbReference type="PANTHER" id="PTHR35326">
    <property type="entry name" value="PROTEIN PSBN"/>
    <property type="match status" value="1"/>
</dbReference>
<dbReference type="PANTHER" id="PTHR35326:SF3">
    <property type="entry name" value="PROTEIN PSBN"/>
    <property type="match status" value="1"/>
</dbReference>
<dbReference type="Pfam" id="PF02468">
    <property type="entry name" value="PsbN"/>
    <property type="match status" value="1"/>
</dbReference>